<name>ATPB_PELTS</name>
<comment type="function">
    <text evidence="1">Produces ATP from ADP in the presence of a proton gradient across the membrane. The catalytic sites are hosted primarily by the beta subunits.</text>
</comment>
<comment type="catalytic activity">
    <reaction evidence="1">
        <text>ATP + H2O + 4 H(+)(in) = ADP + phosphate + 5 H(+)(out)</text>
        <dbReference type="Rhea" id="RHEA:57720"/>
        <dbReference type="ChEBI" id="CHEBI:15377"/>
        <dbReference type="ChEBI" id="CHEBI:15378"/>
        <dbReference type="ChEBI" id="CHEBI:30616"/>
        <dbReference type="ChEBI" id="CHEBI:43474"/>
        <dbReference type="ChEBI" id="CHEBI:456216"/>
        <dbReference type="EC" id="7.1.2.2"/>
    </reaction>
</comment>
<comment type="subunit">
    <text evidence="1">F-type ATPases have 2 components, CF(1) - the catalytic core - and CF(0) - the membrane proton channel. CF(1) has five subunits: alpha(3), beta(3), gamma(1), delta(1), epsilon(1). CF(0) has three main subunits: a(1), b(2) and c(9-12). The alpha and beta chains form an alternating ring which encloses part of the gamma chain. CF(1) is attached to CF(0) by a central stalk formed by the gamma and epsilon chains, while a peripheral stalk is formed by the delta and b chains.</text>
</comment>
<comment type="subcellular location">
    <subcellularLocation>
        <location evidence="1">Cell membrane</location>
        <topology evidence="1">Peripheral membrane protein</topology>
    </subcellularLocation>
</comment>
<comment type="similarity">
    <text evidence="1">Belongs to the ATPase alpha/beta chains family.</text>
</comment>
<dbReference type="EC" id="7.1.2.2" evidence="1"/>
<dbReference type="EMBL" id="AP009389">
    <property type="protein sequence ID" value="BAF60993.1"/>
    <property type="molecule type" value="Genomic_DNA"/>
</dbReference>
<dbReference type="SMR" id="A5CYE2"/>
<dbReference type="STRING" id="370438.PTH_2812"/>
<dbReference type="KEGG" id="pth:PTH_2812"/>
<dbReference type="eggNOG" id="COG0055">
    <property type="taxonomic scope" value="Bacteria"/>
</dbReference>
<dbReference type="HOGENOM" id="CLU_022398_0_2_9"/>
<dbReference type="Proteomes" id="UP000006556">
    <property type="component" value="Chromosome"/>
</dbReference>
<dbReference type="GO" id="GO:0005886">
    <property type="term" value="C:plasma membrane"/>
    <property type="evidence" value="ECO:0007669"/>
    <property type="project" value="UniProtKB-SubCell"/>
</dbReference>
<dbReference type="GO" id="GO:0045259">
    <property type="term" value="C:proton-transporting ATP synthase complex"/>
    <property type="evidence" value="ECO:0007669"/>
    <property type="project" value="UniProtKB-KW"/>
</dbReference>
<dbReference type="GO" id="GO:0005524">
    <property type="term" value="F:ATP binding"/>
    <property type="evidence" value="ECO:0007669"/>
    <property type="project" value="UniProtKB-UniRule"/>
</dbReference>
<dbReference type="GO" id="GO:0016887">
    <property type="term" value="F:ATP hydrolysis activity"/>
    <property type="evidence" value="ECO:0007669"/>
    <property type="project" value="InterPro"/>
</dbReference>
<dbReference type="GO" id="GO:0046933">
    <property type="term" value="F:proton-transporting ATP synthase activity, rotational mechanism"/>
    <property type="evidence" value="ECO:0007669"/>
    <property type="project" value="UniProtKB-UniRule"/>
</dbReference>
<dbReference type="CDD" id="cd18110">
    <property type="entry name" value="ATP-synt_F1_beta_C"/>
    <property type="match status" value="1"/>
</dbReference>
<dbReference type="CDD" id="cd18115">
    <property type="entry name" value="ATP-synt_F1_beta_N"/>
    <property type="match status" value="1"/>
</dbReference>
<dbReference type="CDD" id="cd01133">
    <property type="entry name" value="F1-ATPase_beta_CD"/>
    <property type="match status" value="1"/>
</dbReference>
<dbReference type="FunFam" id="1.10.1140.10:FF:000001">
    <property type="entry name" value="ATP synthase subunit beta"/>
    <property type="match status" value="1"/>
</dbReference>
<dbReference type="FunFam" id="2.40.10.170:FF:000005">
    <property type="entry name" value="ATP synthase subunit beta"/>
    <property type="match status" value="1"/>
</dbReference>
<dbReference type="FunFam" id="3.40.50.300:FF:000026">
    <property type="entry name" value="ATP synthase subunit beta"/>
    <property type="match status" value="1"/>
</dbReference>
<dbReference type="Gene3D" id="2.40.10.170">
    <property type="match status" value="1"/>
</dbReference>
<dbReference type="Gene3D" id="1.10.1140.10">
    <property type="entry name" value="Bovine Mitochondrial F1-atpase, Atp Synthase Beta Chain, Chain D, domain 3"/>
    <property type="match status" value="1"/>
</dbReference>
<dbReference type="Gene3D" id="3.40.50.300">
    <property type="entry name" value="P-loop containing nucleotide triphosphate hydrolases"/>
    <property type="match status" value="1"/>
</dbReference>
<dbReference type="HAMAP" id="MF_01347">
    <property type="entry name" value="ATP_synth_beta_bact"/>
    <property type="match status" value="1"/>
</dbReference>
<dbReference type="InterPro" id="IPR003593">
    <property type="entry name" value="AAA+_ATPase"/>
</dbReference>
<dbReference type="InterPro" id="IPR055190">
    <property type="entry name" value="ATP-synt_VA_C"/>
</dbReference>
<dbReference type="InterPro" id="IPR005722">
    <property type="entry name" value="ATP_synth_F1_bsu"/>
</dbReference>
<dbReference type="InterPro" id="IPR020003">
    <property type="entry name" value="ATPase_a/bsu_AS"/>
</dbReference>
<dbReference type="InterPro" id="IPR050053">
    <property type="entry name" value="ATPase_alpha/beta_chains"/>
</dbReference>
<dbReference type="InterPro" id="IPR004100">
    <property type="entry name" value="ATPase_F1/V1/A1_a/bsu_N"/>
</dbReference>
<dbReference type="InterPro" id="IPR036121">
    <property type="entry name" value="ATPase_F1/V1/A1_a/bsu_N_sf"/>
</dbReference>
<dbReference type="InterPro" id="IPR000194">
    <property type="entry name" value="ATPase_F1/V1/A1_a/bsu_nucl-bd"/>
</dbReference>
<dbReference type="InterPro" id="IPR024034">
    <property type="entry name" value="ATPase_F1/V1_b/a_C"/>
</dbReference>
<dbReference type="InterPro" id="IPR027417">
    <property type="entry name" value="P-loop_NTPase"/>
</dbReference>
<dbReference type="NCBIfam" id="TIGR01039">
    <property type="entry name" value="atpD"/>
    <property type="match status" value="1"/>
</dbReference>
<dbReference type="PANTHER" id="PTHR15184">
    <property type="entry name" value="ATP SYNTHASE"/>
    <property type="match status" value="1"/>
</dbReference>
<dbReference type="PANTHER" id="PTHR15184:SF71">
    <property type="entry name" value="ATP SYNTHASE SUBUNIT BETA, MITOCHONDRIAL"/>
    <property type="match status" value="1"/>
</dbReference>
<dbReference type="Pfam" id="PF00006">
    <property type="entry name" value="ATP-synt_ab"/>
    <property type="match status" value="1"/>
</dbReference>
<dbReference type="Pfam" id="PF02874">
    <property type="entry name" value="ATP-synt_ab_N"/>
    <property type="match status" value="1"/>
</dbReference>
<dbReference type="Pfam" id="PF22919">
    <property type="entry name" value="ATP-synt_VA_C"/>
    <property type="match status" value="1"/>
</dbReference>
<dbReference type="SMART" id="SM00382">
    <property type="entry name" value="AAA"/>
    <property type="match status" value="1"/>
</dbReference>
<dbReference type="SUPFAM" id="SSF47917">
    <property type="entry name" value="C-terminal domain of alpha and beta subunits of F1 ATP synthase"/>
    <property type="match status" value="1"/>
</dbReference>
<dbReference type="SUPFAM" id="SSF50615">
    <property type="entry name" value="N-terminal domain of alpha and beta subunits of F1 ATP synthase"/>
    <property type="match status" value="1"/>
</dbReference>
<dbReference type="SUPFAM" id="SSF52540">
    <property type="entry name" value="P-loop containing nucleoside triphosphate hydrolases"/>
    <property type="match status" value="1"/>
</dbReference>
<dbReference type="PROSITE" id="PS00152">
    <property type="entry name" value="ATPASE_ALPHA_BETA"/>
    <property type="match status" value="1"/>
</dbReference>
<reference key="1">
    <citation type="journal article" date="2008" name="Genome Res.">
        <title>The genome of Pelotomaculum thermopropionicum reveals niche-associated evolution in anaerobic microbiota.</title>
        <authorList>
            <person name="Kosaka T."/>
            <person name="Kato S."/>
            <person name="Shimoyama T."/>
            <person name="Ishii S."/>
            <person name="Abe T."/>
            <person name="Watanabe K."/>
        </authorList>
    </citation>
    <scope>NUCLEOTIDE SEQUENCE [LARGE SCALE GENOMIC DNA]</scope>
    <source>
        <strain>DSM 13744 / JCM 10971 / SI</strain>
    </source>
</reference>
<evidence type="ECO:0000255" key="1">
    <source>
        <dbReference type="HAMAP-Rule" id="MF_01347"/>
    </source>
</evidence>
<sequence length="470" mass="50858">MNVGHVVQVIGVVVDIRFPPGQVPDIYNAIKITSDKEDAFGRKIDLTLEVAQHLGNNTVRTVAMSSTDGLVRGMKAVDTGAPITCPVGRPTLGRLVDVLGQPIDGKGPIISDKRYPIHRPAPPLVEQSTKAEQLETGIKVIDLLVPFLKGGKIGLFGGAGVGKTVIVMELINNIAKQHGGISVFAGVGERTREGNDLYREMTEAGVLDKTTMVFGQMNEPPGARLRVALTGLCLAEYFRDEEGADTLLFIDNIFRFTQAGSEVSALLGRMPSAVGYQPTLATEMGQMQERITSTVKGSVTSVQAVYVPADDLTDPAPATTFAHLDGTVVLSRQIAELGIYPAVDPLDSTSRILDPLVVGNEHYQTARGVQKVLQRYKELQDIIAILGMEELSDDDKLVVARARKLQRFLSQPFHVAEAFTGMSGKFVPIKETIRGFQEILDGKHDDLPEDAFYMVGSIEEAVEKGKKLLG</sequence>
<feature type="chain" id="PRO_0000339567" description="ATP synthase subunit beta">
    <location>
        <begin position="1"/>
        <end position="470"/>
    </location>
</feature>
<feature type="binding site" evidence="1">
    <location>
        <begin position="157"/>
        <end position="164"/>
    </location>
    <ligand>
        <name>ATP</name>
        <dbReference type="ChEBI" id="CHEBI:30616"/>
    </ligand>
</feature>
<keyword id="KW-0066">ATP synthesis</keyword>
<keyword id="KW-0067">ATP-binding</keyword>
<keyword id="KW-1003">Cell membrane</keyword>
<keyword id="KW-0139">CF(1)</keyword>
<keyword id="KW-0375">Hydrogen ion transport</keyword>
<keyword id="KW-0406">Ion transport</keyword>
<keyword id="KW-0472">Membrane</keyword>
<keyword id="KW-0547">Nucleotide-binding</keyword>
<keyword id="KW-1185">Reference proteome</keyword>
<keyword id="KW-1278">Translocase</keyword>
<keyword id="KW-0813">Transport</keyword>
<accession>A5CYE2</accession>
<protein>
    <recommendedName>
        <fullName evidence="1">ATP synthase subunit beta</fullName>
        <ecNumber evidence="1">7.1.2.2</ecNumber>
    </recommendedName>
    <alternativeName>
        <fullName evidence="1">ATP synthase F1 sector subunit beta</fullName>
    </alternativeName>
    <alternativeName>
        <fullName evidence="1">F-ATPase subunit beta</fullName>
    </alternativeName>
</protein>
<proteinExistence type="inferred from homology"/>
<gene>
    <name evidence="1" type="primary">atpD</name>
    <name type="ordered locus">PTH_2812</name>
</gene>
<organism>
    <name type="scientific">Pelotomaculum thermopropionicum (strain DSM 13744 / JCM 10971 / SI)</name>
    <dbReference type="NCBI Taxonomy" id="370438"/>
    <lineage>
        <taxon>Bacteria</taxon>
        <taxon>Bacillati</taxon>
        <taxon>Bacillota</taxon>
        <taxon>Clostridia</taxon>
        <taxon>Eubacteriales</taxon>
        <taxon>Desulfotomaculaceae</taxon>
        <taxon>Pelotomaculum</taxon>
    </lineage>
</organism>